<accession>Q66IV1</accession>
<comment type="function">
    <molecule>Myelin regulatory factor</molecule>
    <text evidence="1 2">Constitutes a precursor of the transcription factor. Mediates the autocatalytic cleavage that releases the Myelin regulatory factor, N-terminal component that specifically activates transcription of central nervous system (CNS) myelin genes (By similarity).</text>
</comment>
<comment type="function">
    <molecule>Myelin regulatory factor, C-terminal</molecule>
    <text evidence="1 2">Membrane-bound part that has no transcription factor activity and remains attached to the endoplasmic reticulum membrane following cleavage.</text>
</comment>
<comment type="function">
    <molecule>Myelin regulatory factor, N-terminal</molecule>
    <text evidence="1 2">Transcription factor that specifically activates expression of myelin genes during oligodendrocyte (OL) maturation, thereby playing a central role in oligodendrocyte maturation and CNS myelination.</text>
</comment>
<comment type="subunit">
    <text evidence="1 2">Homotrimer.</text>
</comment>
<comment type="subcellular location">
    <molecule>Myelin regulatory factor</molecule>
    <subcellularLocation>
        <location evidence="1 2">Endoplasmic reticulum membrane</location>
        <topology evidence="1 2">Single-pass membrane protein</topology>
    </subcellularLocation>
</comment>
<comment type="subcellular location">
    <molecule>Myelin regulatory factor, N-terminal</molecule>
    <subcellularLocation>
        <location evidence="1 2">Nucleus</location>
    </subcellularLocation>
    <subcellularLocation>
        <location evidence="1 2">Cytoplasm</location>
    </subcellularLocation>
    <text evidence="1 2">Translocates from the cytoplasm to the nucleus upon autocatalytic cleavage.</text>
</comment>
<comment type="subcellular location">
    <molecule>Myelin regulatory factor, C-terminal</molecule>
    <subcellularLocation>
        <location evidence="1 2">Endoplasmic reticulum membrane</location>
        <topology evidence="1 2">Single-pass membrane protein</topology>
    </subcellularLocation>
</comment>
<comment type="domain">
    <molecule>Myelin regulatory factor</molecule>
    <text evidence="1 2">The peptidase S74 domain, also named Intramolecular Chaperone Auto-processed (ICA) domain or Intramolecular Chaperone Domain (ICD), has protease activity and mediates autocatalytic processing of the protein to generate the Myelin regulatory factor, N-terminal active transcription factor and the Myelin regulatory factor, C-terminal components.</text>
</comment>
<comment type="PTM">
    <molecule>Myelin regulatory factor</molecule>
    <text evidence="1 2">Follows autocatalytic cleavage via the peptidase S74 domain. Autoprocessing is apparently constitutive and is essential for transcriptional activity.</text>
</comment>
<comment type="similarity">
    <text evidence="7">Belongs to the MRF family.</text>
</comment>
<dbReference type="EC" id="3.4.-.-"/>
<dbReference type="EMBL" id="BC081179">
    <property type="protein sequence ID" value="AAH81179.1"/>
    <property type="molecule type" value="mRNA"/>
</dbReference>
<dbReference type="RefSeq" id="NP_001087759.1">
    <property type="nucleotide sequence ID" value="NM_001094290.1"/>
</dbReference>
<dbReference type="SMR" id="Q66IV1"/>
<dbReference type="GlyCosmos" id="Q66IV1">
    <property type="glycosylation" value="4 sites, No reported glycans"/>
</dbReference>
<dbReference type="GeneID" id="447583"/>
<dbReference type="KEGG" id="xla:447583"/>
<dbReference type="AGR" id="Xenbase:XB-GENE-1020972"/>
<dbReference type="CTD" id="447583"/>
<dbReference type="OrthoDB" id="27041at2759"/>
<dbReference type="Proteomes" id="UP000186698">
    <property type="component" value="Chromosome 4L"/>
</dbReference>
<dbReference type="Bgee" id="447583">
    <property type="expression patterns" value="Expressed in stomach and 11 other cell types or tissues"/>
</dbReference>
<dbReference type="GO" id="GO:0005737">
    <property type="term" value="C:cytoplasm"/>
    <property type="evidence" value="ECO:0000250"/>
    <property type="project" value="UniProtKB"/>
</dbReference>
<dbReference type="GO" id="GO:0005789">
    <property type="term" value="C:endoplasmic reticulum membrane"/>
    <property type="evidence" value="ECO:0000250"/>
    <property type="project" value="UniProtKB"/>
</dbReference>
<dbReference type="GO" id="GO:0005634">
    <property type="term" value="C:nucleus"/>
    <property type="evidence" value="ECO:0000250"/>
    <property type="project" value="UniProtKB"/>
</dbReference>
<dbReference type="GO" id="GO:0003700">
    <property type="term" value="F:DNA-binding transcription factor activity"/>
    <property type="evidence" value="ECO:0000318"/>
    <property type="project" value="GO_Central"/>
</dbReference>
<dbReference type="GO" id="GO:0008233">
    <property type="term" value="F:peptidase activity"/>
    <property type="evidence" value="ECO:0007669"/>
    <property type="project" value="UniProtKB-KW"/>
</dbReference>
<dbReference type="GO" id="GO:0043565">
    <property type="term" value="F:sequence-specific DNA binding"/>
    <property type="evidence" value="ECO:0000318"/>
    <property type="project" value="GO_Central"/>
</dbReference>
<dbReference type="GO" id="GO:0032286">
    <property type="term" value="P:central nervous system myelin maintenance"/>
    <property type="evidence" value="ECO:0000250"/>
    <property type="project" value="UniProtKB"/>
</dbReference>
<dbReference type="GO" id="GO:0022010">
    <property type="term" value="P:central nervous system myelination"/>
    <property type="evidence" value="ECO:0000250"/>
    <property type="project" value="UniProtKB"/>
</dbReference>
<dbReference type="GO" id="GO:0014003">
    <property type="term" value="P:oligodendrocyte development"/>
    <property type="evidence" value="ECO:0000250"/>
    <property type="project" value="UniProtKB"/>
</dbReference>
<dbReference type="GO" id="GO:0048709">
    <property type="term" value="P:oligodendrocyte differentiation"/>
    <property type="evidence" value="ECO:0000250"/>
    <property type="project" value="UniProtKB"/>
</dbReference>
<dbReference type="GO" id="GO:0045893">
    <property type="term" value="P:positive regulation of DNA-templated transcription"/>
    <property type="evidence" value="ECO:0000250"/>
    <property type="project" value="UniProtKB"/>
</dbReference>
<dbReference type="GO" id="GO:0031643">
    <property type="term" value="P:positive regulation of myelination"/>
    <property type="evidence" value="ECO:0000250"/>
    <property type="project" value="UniProtKB"/>
</dbReference>
<dbReference type="GO" id="GO:0016540">
    <property type="term" value="P:protein autoprocessing"/>
    <property type="evidence" value="ECO:0000250"/>
    <property type="project" value="UniProtKB"/>
</dbReference>
<dbReference type="CDD" id="cd10144">
    <property type="entry name" value="Peptidase_S74_CIMCD"/>
    <property type="match status" value="1"/>
</dbReference>
<dbReference type="FunFam" id="2.60.40.1390:FF:000001">
    <property type="entry name" value="Myelin gene regulatory factor"/>
    <property type="match status" value="1"/>
</dbReference>
<dbReference type="FunFam" id="2.60.40.1390:FF:000011">
    <property type="entry name" value="Myelin regulatory factor-like"/>
    <property type="match status" value="1"/>
</dbReference>
<dbReference type="Gene3D" id="2.60.40.1390">
    <property type="entry name" value="NDT80 DNA-binding domain"/>
    <property type="match status" value="1"/>
</dbReference>
<dbReference type="InterPro" id="IPR051577">
    <property type="entry name" value="MRF-like"/>
</dbReference>
<dbReference type="InterPro" id="IPR025719">
    <property type="entry name" value="MYRF_C2"/>
</dbReference>
<dbReference type="InterPro" id="IPR026932">
    <property type="entry name" value="MYRF_ICA"/>
</dbReference>
<dbReference type="InterPro" id="IPR024061">
    <property type="entry name" value="NDT80_DNA-bd_dom"/>
</dbReference>
<dbReference type="InterPro" id="IPR037141">
    <property type="entry name" value="NDT80_DNA-bd_dom_sf"/>
</dbReference>
<dbReference type="InterPro" id="IPR008967">
    <property type="entry name" value="p53-like_TF_DNA-bd_sf"/>
</dbReference>
<dbReference type="InterPro" id="IPR030392">
    <property type="entry name" value="S74_ICA"/>
</dbReference>
<dbReference type="PANTHER" id="PTHR13029">
    <property type="match status" value="1"/>
</dbReference>
<dbReference type="PANTHER" id="PTHR13029:SF16">
    <property type="entry name" value="MYELIN REGULATORY FACTOR"/>
    <property type="match status" value="1"/>
</dbReference>
<dbReference type="Pfam" id="PF13888">
    <property type="entry name" value="MRF_C2"/>
    <property type="match status" value="1"/>
</dbReference>
<dbReference type="Pfam" id="PF13887">
    <property type="entry name" value="MYRF_ICA"/>
    <property type="match status" value="1"/>
</dbReference>
<dbReference type="Pfam" id="PF05224">
    <property type="entry name" value="NDT80_PhoG"/>
    <property type="match status" value="1"/>
</dbReference>
<dbReference type="Pfam" id="PF13884">
    <property type="entry name" value="Peptidase_S74"/>
    <property type="match status" value="1"/>
</dbReference>
<dbReference type="SUPFAM" id="SSF49417">
    <property type="entry name" value="p53-like transcription factors"/>
    <property type="match status" value="1"/>
</dbReference>
<dbReference type="PROSITE" id="PS51688">
    <property type="entry name" value="ICA"/>
    <property type="match status" value="1"/>
</dbReference>
<dbReference type="PROSITE" id="PS51517">
    <property type="entry name" value="NDT80"/>
    <property type="match status" value="1"/>
</dbReference>
<organism>
    <name type="scientific">Xenopus laevis</name>
    <name type="common">African clawed frog</name>
    <dbReference type="NCBI Taxonomy" id="8355"/>
    <lineage>
        <taxon>Eukaryota</taxon>
        <taxon>Metazoa</taxon>
        <taxon>Chordata</taxon>
        <taxon>Craniata</taxon>
        <taxon>Vertebrata</taxon>
        <taxon>Euteleostomi</taxon>
        <taxon>Amphibia</taxon>
        <taxon>Batrachia</taxon>
        <taxon>Anura</taxon>
        <taxon>Pipoidea</taxon>
        <taxon>Pipidae</taxon>
        <taxon>Xenopodinae</taxon>
        <taxon>Xenopus</taxon>
        <taxon>Xenopus</taxon>
    </lineage>
</organism>
<reference key="1">
    <citation type="submission" date="2004-08" db="EMBL/GenBank/DDBJ databases">
        <authorList>
            <consortium name="NIH - Xenopus Gene Collection (XGC) project"/>
        </authorList>
    </citation>
    <scope>NUCLEOTIDE SEQUENCE [LARGE SCALE MRNA]</scope>
    <source>
        <tissue>Eye</tissue>
    </source>
</reference>
<name>MYRF_XENLA</name>
<proteinExistence type="evidence at transcript level"/>
<sequence length="1092" mass="120780">MDVEDENETLRRFFEGHDINGALEPSNIDTSILEDYISKEDSSEICFPDIPSSVSYASPQPCGSSGVHLSSVLSNVGHTGSINSGGVHHLGQQMAVRPGPGPTCGGPPYPPHLNCNNNNAMLNPKGYPMCMSNQGLPIKAEPKTSYAAGTLPDSPPDSGSEAYSPQQLSDPHLLRTMTPENICHITPPSRLEHPPPPHLQGPLPPHSIHQQHYPSMQRELYMKVESMMPQYQNLGPAMPPADLHHAQQSQMLHQLLQQQHGAELPVHPSKKRKHSDSPTNTLREQISNGGMVKSEPGLIQDNDSLNGSYLDPNYQSIKWQPHLQNKWVSLYDASYKELPMLTYKVDADKGFNFSTGDDSFVCQKKNHFQVTVYIGMIGEPKYVKTPEGILPIECFFLKLNGVKLEAINQAISIEQSQSDRSKRPFHPVTLSLPPDQVTKVTVGRLHFSETTSNNMRKKGKPNPDQRYFLLVVALQVQAQNQTYLVAAQASERIIVRASNPGQFESDSEVLWQRGQLPDTVFHHGRIGINTERPDEALVVHGNVKIMGSLMHPSDIRAKESVEEVDTTEQLKRISQMRLVHYHYKPEFASTVGLDENAAETGVIAQEVQEILPEAVKESGDLVCANGETIENFLVVNKERIFMENVGAVKELCKLTDNLETRIDELERWSHKLAKLRRLDSMKSTNSHTGSSQFSRAGSVPYKQRPPKVMGKTVPGPAHQSCVSQRFLQATIIALVIIMAFSVISMTTLYVLNLRSEDDMLGIDGSLTPPGSCTLTFFRQIHLTLPYALCTGSSQNFDTTQLKGNTTPPPKITKSPDWQQDPPLTINLCMDPPCEVVCCPHILSSESPTITRKTSAASAETISQTDPAPSTIIRKAKSRNLDKNRNSLQTLPRPVSPLPPYTQGKNKHSPNSLPVRDVRKRRSLEEESTPITPMDRTQGNSNDSRYSLTSLRLLETDALITNRSCSSMDTCGSGNYTYKLPISKYSPLSGSLSLELNSSSPVSVNFCETSKGKGCQEPAAVTSPRDQSCPQGTDVCVTQVSPTSHLWSLQLLPSQDFTFHLRVSPPGASGCDDLSIDPSQVTDYYFRFYRLCD</sequence>
<feature type="chain" id="PRO_0000318921" description="Myelin regulatory factor">
    <location>
        <begin position="1"/>
        <end position="1092"/>
    </location>
</feature>
<feature type="chain" id="PRO_0000424314" description="Myelin regulatory factor, N-terminal" evidence="1 2">
    <location>
        <begin position="1"/>
        <end position="552"/>
    </location>
</feature>
<feature type="chain" id="PRO_0000424315" description="Myelin regulatory factor, C-terminal" evidence="1 2">
    <location>
        <begin position="553"/>
        <end position="1092"/>
    </location>
</feature>
<feature type="topological domain" description="Cytoplasmic" evidence="3">
    <location>
        <begin position="1"/>
        <end position="730"/>
    </location>
</feature>
<feature type="transmembrane region" description="Helical" evidence="3">
    <location>
        <begin position="731"/>
        <end position="751"/>
    </location>
</feature>
<feature type="topological domain" description="Lumenal" evidence="3">
    <location>
        <begin position="752"/>
        <end position="1092"/>
    </location>
</feature>
<feature type="domain" description="Peptidase S74" evidence="5">
    <location>
        <begin position="553"/>
        <end position="662"/>
    </location>
</feature>
<feature type="DNA-binding region" description="NDT80" evidence="4">
    <location>
        <begin position="246"/>
        <end position="507"/>
    </location>
</feature>
<feature type="region of interest" description="Disordered" evidence="6">
    <location>
        <begin position="145"/>
        <end position="168"/>
    </location>
</feature>
<feature type="region of interest" description="Disordered" evidence="6">
    <location>
        <begin position="187"/>
        <end position="210"/>
    </location>
</feature>
<feature type="region of interest" description="Disordered" evidence="6">
    <location>
        <begin position="258"/>
        <end position="282"/>
    </location>
</feature>
<feature type="region of interest" description="Disordered" evidence="6">
    <location>
        <begin position="681"/>
        <end position="714"/>
    </location>
</feature>
<feature type="region of interest" description="Disordered" evidence="6">
    <location>
        <begin position="798"/>
        <end position="817"/>
    </location>
</feature>
<feature type="region of interest" description="Disordered" evidence="6">
    <location>
        <begin position="849"/>
        <end position="945"/>
    </location>
</feature>
<feature type="coiled-coil region" evidence="3">
    <location>
        <begin position="646"/>
        <end position="677"/>
    </location>
</feature>
<feature type="compositionally biased region" description="Pro residues" evidence="6">
    <location>
        <begin position="196"/>
        <end position="205"/>
    </location>
</feature>
<feature type="compositionally biased region" description="Polar residues" evidence="6">
    <location>
        <begin position="681"/>
        <end position="695"/>
    </location>
</feature>
<feature type="compositionally biased region" description="Polar residues" evidence="6">
    <location>
        <begin position="849"/>
        <end position="867"/>
    </location>
</feature>
<feature type="compositionally biased region" description="Polar residues" evidence="6">
    <location>
        <begin position="928"/>
        <end position="945"/>
    </location>
</feature>
<feature type="site" description="Cleavage; by autolysis" evidence="5">
    <location>
        <begin position="552"/>
        <end position="553"/>
    </location>
</feature>
<feature type="glycosylation site" description="N-linked (GlcNAc...) asparagine" evidence="3">
    <location>
        <position position="941"/>
    </location>
</feature>
<feature type="glycosylation site" description="N-linked (GlcNAc...) asparagine" evidence="3">
    <location>
        <position position="961"/>
    </location>
</feature>
<feature type="glycosylation site" description="N-linked (GlcNAc...) asparagine" evidence="3">
    <location>
        <position position="974"/>
    </location>
</feature>
<feature type="glycosylation site" description="N-linked (GlcNAc...) asparagine" evidence="3">
    <location>
        <position position="996"/>
    </location>
</feature>
<gene>
    <name type="primary">myrf</name>
    <name type="synonym">mrf</name>
</gene>
<protein>
    <recommendedName>
        <fullName>Myelin regulatory factor</fullName>
        <ecNumber>3.4.-.-</ecNumber>
    </recommendedName>
    <alternativeName>
        <fullName>Myelin gene regulatory factor</fullName>
    </alternativeName>
    <component>
        <recommendedName>
            <fullName>Myelin regulatory factor, N-terminal</fullName>
        </recommendedName>
    </component>
    <component>
        <recommendedName>
            <fullName>Myelin regulatory factor, C-terminal</fullName>
        </recommendedName>
    </component>
</protein>
<evidence type="ECO:0000250" key="1">
    <source>
        <dbReference type="UniProtKB" id="Q3UR85"/>
    </source>
</evidence>
<evidence type="ECO:0000250" key="2">
    <source>
        <dbReference type="UniProtKB" id="Q9Y2G1"/>
    </source>
</evidence>
<evidence type="ECO:0000255" key="3"/>
<evidence type="ECO:0000255" key="4">
    <source>
        <dbReference type="PROSITE-ProRule" id="PRU00850"/>
    </source>
</evidence>
<evidence type="ECO:0000255" key="5">
    <source>
        <dbReference type="PROSITE-ProRule" id="PRU01025"/>
    </source>
</evidence>
<evidence type="ECO:0000256" key="6">
    <source>
        <dbReference type="SAM" id="MobiDB-lite"/>
    </source>
</evidence>
<evidence type="ECO:0000305" key="7"/>
<keyword id="KW-0010">Activator</keyword>
<keyword id="KW-0068">Autocatalytic cleavage</keyword>
<keyword id="KW-0175">Coiled coil</keyword>
<keyword id="KW-0963">Cytoplasm</keyword>
<keyword id="KW-0221">Differentiation</keyword>
<keyword id="KW-0238">DNA-binding</keyword>
<keyword id="KW-0256">Endoplasmic reticulum</keyword>
<keyword id="KW-0325">Glycoprotein</keyword>
<keyword id="KW-0378">Hydrolase</keyword>
<keyword id="KW-0472">Membrane</keyword>
<keyword id="KW-0539">Nucleus</keyword>
<keyword id="KW-0645">Protease</keyword>
<keyword id="KW-1185">Reference proteome</keyword>
<keyword id="KW-0804">Transcription</keyword>
<keyword id="KW-0805">Transcription regulation</keyword>
<keyword id="KW-0812">Transmembrane</keyword>
<keyword id="KW-1133">Transmembrane helix</keyword>